<feature type="chain" id="PRO_0000181135" description="Large ribosomal subunit protein bL27">
    <location>
        <begin position="1"/>
        <end position="88"/>
    </location>
</feature>
<feature type="region of interest" description="Disordered" evidence="2">
    <location>
        <begin position="1"/>
        <end position="25"/>
    </location>
</feature>
<feature type="compositionally biased region" description="Polar residues" evidence="2">
    <location>
        <begin position="7"/>
        <end position="19"/>
    </location>
</feature>
<name>RL27_NOCFA</name>
<proteinExistence type="inferred from homology"/>
<comment type="similarity">
    <text evidence="1">Belongs to the bacterial ribosomal protein bL27 family.</text>
</comment>
<organism>
    <name type="scientific">Nocardia farcinica (strain IFM 10152)</name>
    <dbReference type="NCBI Taxonomy" id="247156"/>
    <lineage>
        <taxon>Bacteria</taxon>
        <taxon>Bacillati</taxon>
        <taxon>Actinomycetota</taxon>
        <taxon>Actinomycetes</taxon>
        <taxon>Mycobacteriales</taxon>
        <taxon>Nocardiaceae</taxon>
        <taxon>Nocardia</taxon>
    </lineage>
</organism>
<reference key="1">
    <citation type="journal article" date="2004" name="Proc. Natl. Acad. Sci. U.S.A.">
        <title>The complete genomic sequence of Nocardia farcinica IFM 10152.</title>
        <authorList>
            <person name="Ishikawa J."/>
            <person name="Yamashita A."/>
            <person name="Mikami Y."/>
            <person name="Hoshino Y."/>
            <person name="Kurita H."/>
            <person name="Hotta K."/>
            <person name="Shiba T."/>
            <person name="Hattori M."/>
        </authorList>
    </citation>
    <scope>NUCLEOTIDE SEQUENCE [LARGE SCALE GENOMIC DNA]</scope>
    <source>
        <strain>IFM 10152</strain>
    </source>
</reference>
<accession>Q5Z042</accession>
<dbReference type="EMBL" id="AP006618">
    <property type="protein sequence ID" value="BAD56199.1"/>
    <property type="molecule type" value="Genomic_DNA"/>
</dbReference>
<dbReference type="RefSeq" id="WP_011207884.1">
    <property type="nucleotide sequence ID" value="NC_006361.1"/>
</dbReference>
<dbReference type="SMR" id="Q5Z042"/>
<dbReference type="STRING" id="247156.NFA_13540"/>
<dbReference type="GeneID" id="61132176"/>
<dbReference type="KEGG" id="nfa:NFA_13540"/>
<dbReference type="eggNOG" id="COG0211">
    <property type="taxonomic scope" value="Bacteria"/>
</dbReference>
<dbReference type="HOGENOM" id="CLU_095424_4_0_11"/>
<dbReference type="OrthoDB" id="9803474at2"/>
<dbReference type="Proteomes" id="UP000006820">
    <property type="component" value="Chromosome"/>
</dbReference>
<dbReference type="GO" id="GO:0022625">
    <property type="term" value="C:cytosolic large ribosomal subunit"/>
    <property type="evidence" value="ECO:0007669"/>
    <property type="project" value="TreeGrafter"/>
</dbReference>
<dbReference type="GO" id="GO:0003735">
    <property type="term" value="F:structural constituent of ribosome"/>
    <property type="evidence" value="ECO:0007669"/>
    <property type="project" value="InterPro"/>
</dbReference>
<dbReference type="GO" id="GO:0006412">
    <property type="term" value="P:translation"/>
    <property type="evidence" value="ECO:0007669"/>
    <property type="project" value="UniProtKB-UniRule"/>
</dbReference>
<dbReference type="FunFam" id="2.40.50.100:FF:000020">
    <property type="entry name" value="50S ribosomal protein L27"/>
    <property type="match status" value="1"/>
</dbReference>
<dbReference type="Gene3D" id="2.40.50.100">
    <property type="match status" value="1"/>
</dbReference>
<dbReference type="HAMAP" id="MF_00539">
    <property type="entry name" value="Ribosomal_bL27"/>
    <property type="match status" value="1"/>
</dbReference>
<dbReference type="InterPro" id="IPR001684">
    <property type="entry name" value="Ribosomal_bL27"/>
</dbReference>
<dbReference type="InterPro" id="IPR018261">
    <property type="entry name" value="Ribosomal_bL27_CS"/>
</dbReference>
<dbReference type="NCBIfam" id="TIGR00062">
    <property type="entry name" value="L27"/>
    <property type="match status" value="1"/>
</dbReference>
<dbReference type="PANTHER" id="PTHR15893:SF0">
    <property type="entry name" value="LARGE RIBOSOMAL SUBUNIT PROTEIN BL27M"/>
    <property type="match status" value="1"/>
</dbReference>
<dbReference type="PANTHER" id="PTHR15893">
    <property type="entry name" value="RIBOSOMAL PROTEIN L27"/>
    <property type="match status" value="1"/>
</dbReference>
<dbReference type="Pfam" id="PF01016">
    <property type="entry name" value="Ribosomal_L27"/>
    <property type="match status" value="1"/>
</dbReference>
<dbReference type="PRINTS" id="PR00063">
    <property type="entry name" value="RIBOSOMALL27"/>
</dbReference>
<dbReference type="SUPFAM" id="SSF110324">
    <property type="entry name" value="Ribosomal L27 protein-like"/>
    <property type="match status" value="1"/>
</dbReference>
<dbReference type="PROSITE" id="PS00831">
    <property type="entry name" value="RIBOSOMAL_L27"/>
    <property type="match status" value="1"/>
</dbReference>
<gene>
    <name evidence="1" type="primary">rpmA</name>
    <name type="ordered locus">NFA_13540</name>
</gene>
<keyword id="KW-1185">Reference proteome</keyword>
<keyword id="KW-0687">Ribonucleoprotein</keyword>
<keyword id="KW-0689">Ribosomal protein</keyword>
<protein>
    <recommendedName>
        <fullName evidence="1">Large ribosomal subunit protein bL27</fullName>
    </recommendedName>
    <alternativeName>
        <fullName evidence="3">50S ribosomal protein L27</fullName>
    </alternativeName>
</protein>
<sequence length="88" mass="9192">MAHKKGASSSRNGRDSNAQRLGVKRFGGQTVKAGEILVRQRGTHFHPGVNVGRGGDDTLFALAAGAVQFGTKRGRKTVNIVAPAPVQA</sequence>
<evidence type="ECO:0000255" key="1">
    <source>
        <dbReference type="HAMAP-Rule" id="MF_00539"/>
    </source>
</evidence>
<evidence type="ECO:0000256" key="2">
    <source>
        <dbReference type="SAM" id="MobiDB-lite"/>
    </source>
</evidence>
<evidence type="ECO:0000305" key="3"/>